<proteinExistence type="inferred from homology"/>
<feature type="chain" id="PRO_1000086840" description="Small ribosomal subunit protein uS17">
    <location>
        <begin position="1"/>
        <end position="84"/>
    </location>
</feature>
<evidence type="ECO:0000255" key="1">
    <source>
        <dbReference type="HAMAP-Rule" id="MF_01345"/>
    </source>
</evidence>
<evidence type="ECO:0000305" key="2"/>
<reference key="1">
    <citation type="submission" date="2008-02" db="EMBL/GenBank/DDBJ databases">
        <title>Complete sequence of Escherichia coli C str. ATCC 8739.</title>
        <authorList>
            <person name="Copeland A."/>
            <person name="Lucas S."/>
            <person name="Lapidus A."/>
            <person name="Glavina del Rio T."/>
            <person name="Dalin E."/>
            <person name="Tice H."/>
            <person name="Bruce D."/>
            <person name="Goodwin L."/>
            <person name="Pitluck S."/>
            <person name="Kiss H."/>
            <person name="Brettin T."/>
            <person name="Detter J.C."/>
            <person name="Han C."/>
            <person name="Kuske C.R."/>
            <person name="Schmutz J."/>
            <person name="Larimer F."/>
            <person name="Land M."/>
            <person name="Hauser L."/>
            <person name="Kyrpides N."/>
            <person name="Mikhailova N."/>
            <person name="Ingram L."/>
            <person name="Richardson P."/>
        </authorList>
    </citation>
    <scope>NUCLEOTIDE SEQUENCE [LARGE SCALE GENOMIC DNA]</scope>
    <source>
        <strain>ATCC 8739 / DSM 1576 / NBRC 3972 / NCIMB 8545 / WDCM 00012 / Crooks</strain>
    </source>
</reference>
<dbReference type="EMBL" id="CP000946">
    <property type="protein sequence ID" value="ACA76080.1"/>
    <property type="molecule type" value="Genomic_DNA"/>
</dbReference>
<dbReference type="RefSeq" id="WP_000130100.1">
    <property type="nucleotide sequence ID" value="NZ_MTFT01000014.1"/>
</dbReference>
<dbReference type="SMR" id="B1IPY8"/>
<dbReference type="GeneID" id="93778676"/>
<dbReference type="KEGG" id="ecl:EcolC_0402"/>
<dbReference type="HOGENOM" id="CLU_073626_1_1_6"/>
<dbReference type="GO" id="GO:0022627">
    <property type="term" value="C:cytosolic small ribosomal subunit"/>
    <property type="evidence" value="ECO:0007669"/>
    <property type="project" value="TreeGrafter"/>
</dbReference>
<dbReference type="GO" id="GO:0019843">
    <property type="term" value="F:rRNA binding"/>
    <property type="evidence" value="ECO:0007669"/>
    <property type="project" value="UniProtKB-UniRule"/>
</dbReference>
<dbReference type="GO" id="GO:0003735">
    <property type="term" value="F:structural constituent of ribosome"/>
    <property type="evidence" value="ECO:0007669"/>
    <property type="project" value="InterPro"/>
</dbReference>
<dbReference type="GO" id="GO:0006412">
    <property type="term" value="P:translation"/>
    <property type="evidence" value="ECO:0007669"/>
    <property type="project" value="UniProtKB-UniRule"/>
</dbReference>
<dbReference type="CDD" id="cd00364">
    <property type="entry name" value="Ribosomal_uS17"/>
    <property type="match status" value="1"/>
</dbReference>
<dbReference type="FunFam" id="2.40.50.140:FF:000014">
    <property type="entry name" value="30S ribosomal protein S17"/>
    <property type="match status" value="1"/>
</dbReference>
<dbReference type="Gene3D" id="2.40.50.140">
    <property type="entry name" value="Nucleic acid-binding proteins"/>
    <property type="match status" value="1"/>
</dbReference>
<dbReference type="HAMAP" id="MF_01345_B">
    <property type="entry name" value="Ribosomal_uS17_B"/>
    <property type="match status" value="1"/>
</dbReference>
<dbReference type="InterPro" id="IPR012340">
    <property type="entry name" value="NA-bd_OB-fold"/>
</dbReference>
<dbReference type="InterPro" id="IPR000266">
    <property type="entry name" value="Ribosomal_uS17"/>
</dbReference>
<dbReference type="InterPro" id="IPR019984">
    <property type="entry name" value="Ribosomal_uS17_bact/chlr"/>
</dbReference>
<dbReference type="InterPro" id="IPR019979">
    <property type="entry name" value="Ribosomal_uS17_CS"/>
</dbReference>
<dbReference type="NCBIfam" id="NF004123">
    <property type="entry name" value="PRK05610.1"/>
    <property type="match status" value="1"/>
</dbReference>
<dbReference type="NCBIfam" id="TIGR03635">
    <property type="entry name" value="uS17_bact"/>
    <property type="match status" value="1"/>
</dbReference>
<dbReference type="PANTHER" id="PTHR10744">
    <property type="entry name" value="40S RIBOSOMAL PROTEIN S11 FAMILY MEMBER"/>
    <property type="match status" value="1"/>
</dbReference>
<dbReference type="PANTHER" id="PTHR10744:SF1">
    <property type="entry name" value="SMALL RIBOSOMAL SUBUNIT PROTEIN US17M"/>
    <property type="match status" value="1"/>
</dbReference>
<dbReference type="Pfam" id="PF00366">
    <property type="entry name" value="Ribosomal_S17"/>
    <property type="match status" value="1"/>
</dbReference>
<dbReference type="PRINTS" id="PR00973">
    <property type="entry name" value="RIBOSOMALS17"/>
</dbReference>
<dbReference type="SUPFAM" id="SSF50249">
    <property type="entry name" value="Nucleic acid-binding proteins"/>
    <property type="match status" value="1"/>
</dbReference>
<dbReference type="PROSITE" id="PS00056">
    <property type="entry name" value="RIBOSOMAL_S17"/>
    <property type="match status" value="1"/>
</dbReference>
<comment type="function">
    <text evidence="1">One of the primary rRNA binding proteins, it binds specifically to the 5'-end of 16S ribosomal RNA.</text>
</comment>
<comment type="subunit">
    <text evidence="1">Part of the 30S ribosomal subunit.</text>
</comment>
<comment type="similarity">
    <text evidence="1">Belongs to the universal ribosomal protein uS17 family.</text>
</comment>
<keyword id="KW-0687">Ribonucleoprotein</keyword>
<keyword id="KW-0689">Ribosomal protein</keyword>
<keyword id="KW-0694">RNA-binding</keyword>
<keyword id="KW-0699">rRNA-binding</keyword>
<gene>
    <name evidence="1" type="primary">rpsQ</name>
    <name type="ordered locus">EcolC_0402</name>
</gene>
<sequence length="84" mass="9704">MTDKIRTLQGRVVSDKMEKSIVVAIERFVKHPIYGKFIKRTTKLHVHDENNECGIGDVVEIRECRPLSKTKSWTLVRVVEKAVL</sequence>
<protein>
    <recommendedName>
        <fullName evidence="1">Small ribosomal subunit protein uS17</fullName>
    </recommendedName>
    <alternativeName>
        <fullName evidence="2">30S ribosomal protein S17</fullName>
    </alternativeName>
</protein>
<accession>B1IPY8</accession>
<organism>
    <name type="scientific">Escherichia coli (strain ATCC 8739 / DSM 1576 / NBRC 3972 / NCIMB 8545 / WDCM 00012 / Crooks)</name>
    <dbReference type="NCBI Taxonomy" id="481805"/>
    <lineage>
        <taxon>Bacteria</taxon>
        <taxon>Pseudomonadati</taxon>
        <taxon>Pseudomonadota</taxon>
        <taxon>Gammaproteobacteria</taxon>
        <taxon>Enterobacterales</taxon>
        <taxon>Enterobacteriaceae</taxon>
        <taxon>Escherichia</taxon>
    </lineage>
</organism>
<name>RS17_ECOLC</name>